<organism>
    <name type="scientific">Rattus norvegicus</name>
    <name type="common">Rat</name>
    <dbReference type="NCBI Taxonomy" id="10116"/>
    <lineage>
        <taxon>Eukaryota</taxon>
        <taxon>Metazoa</taxon>
        <taxon>Chordata</taxon>
        <taxon>Craniata</taxon>
        <taxon>Vertebrata</taxon>
        <taxon>Euteleostomi</taxon>
        <taxon>Mammalia</taxon>
        <taxon>Eutheria</taxon>
        <taxon>Euarchontoglires</taxon>
        <taxon>Glires</taxon>
        <taxon>Rodentia</taxon>
        <taxon>Myomorpha</taxon>
        <taxon>Muroidea</taxon>
        <taxon>Muridae</taxon>
        <taxon>Murinae</taxon>
        <taxon>Rattus</taxon>
    </lineage>
</organism>
<evidence type="ECO:0000250" key="1"/>
<evidence type="ECO:0000250" key="2">
    <source>
        <dbReference type="UniProtKB" id="O35126"/>
    </source>
</evidence>
<evidence type="ECO:0000250" key="3">
    <source>
        <dbReference type="UniProtKB" id="P54259"/>
    </source>
</evidence>
<evidence type="ECO:0000256" key="4">
    <source>
        <dbReference type="SAM" id="MobiDB-lite"/>
    </source>
</evidence>
<evidence type="ECO:0000269" key="5">
    <source>
    </source>
</evidence>
<evidence type="ECO:0000269" key="6">
    <source>
    </source>
</evidence>
<evidence type="ECO:0000269" key="7">
    <source>
    </source>
</evidence>
<evidence type="ECO:0000305" key="8"/>
<evidence type="ECO:0007744" key="9">
    <source>
    </source>
</evidence>
<sequence length="1183" mass="124779">MKTRQNKDSMSMRSGRKKEAPGPREELRSRGRASPGGVSTSSSDGKAEKSRQTAKKARVEETSTPKANKQGRSEEISESESEETSAPKKTKTEELPRPQSPSDLDSLDGRSINDDGSSDPRDIDQDNRSTSPSIYSPGSVENDSDSSSGLSQGPARPYHPPPLFPPSPPPPDSIPRQPESGFEPHPSVPPTGYHAPMEPPTSRLFQGPPPGAPPPHPQLYPGSAGGGVLSGPPMGPKGGAAASSVGPPSGGKQHPPPTTPIPISSSGASGAPPAKPPNTPVGAGNLPSAPPPATFPHVTPNLPPPPALRPLNNASASPPGMGAQPIPGHLPSPHAMGQGMSGLPPGPEKGPTLAPSPHPLPPASSSAPGPPMRYPYSSCSSSSVAASSSSSAATSQYPASQTLPSYPHSFPPPTSMSVSNQPPKYTQPSLPSQAVWSQGPPPPPPPYGRLLPNNNTHPGPFPPTGGQSTAHPPAPAHHHHQQQQQPQPQPQPQQHHHGNSGPPPPGAYPHPLESSNSHHAHPYNMSPSLGSLRPYPPGPAHLPPSHGQVSYSQAGPNGPPVSSSSNSSGSSSQAAYSCSHPSSSQGPQGASYPFPPVPPITTSSATLSTVIATVASSPAGYKTASPPGPPQYSKRAPSPGSYKTATPPGYKPGSPPSFRTGTPPGYRGTSPPAGPGTFKPGSPTVGPGPLPPAGPSSLSSLPPPPAAPTTGPPLTATQIKQEPAEEYETPESPVPPARSPSPPPKVVDVPSHASQSARFNKHLDRGFNSCARSDLYFVPLEGSKLAKKRADLVEKVRREAEQRAREEKEREREREREKEREREKERELERSVKLAQEGRAPVECPSLGPVPHRPPFEPGSAVATVPPYLGPDTPALRTLSEYARPHVMSPGNRNHPFYVPLGAVDPGLLGYNVPALYSSDPAAREREREARERDLRDRLKPGFEVKPSELEPLHGVPGPGLDPFPRHGGLALQPGPPGLHPFPFHPSLGPLERERLALAAGPALRPDMSYAERLAAERQHAERVAALGNDPLARLQMLNVTPHHHQHSHIHSHLHLHQQDAIHAASASVHPLIDPLASGSHLTRIPYPAGTLPNPLLPHPLHENEVLRHQLFAAPYRDLPASLSAPMSAAHQLQAMHAQSAELQRLALEQQQWLHAHHPLHSVPLPAQEDYYSHLKKESDKPL</sequence>
<gene>
    <name type="primary">Atn1</name>
    <name type="synonym">Drpla</name>
</gene>
<name>ATN1_RAT</name>
<comment type="function">
    <text evidence="2">Transcriptional corepressor. Recruits NR2E1 to repress transcription. Promotes vascular smooth cell (VSMC) migration and orientation. Corepressor of MTG8 transcriptional repression. Has some intrinsic repression activity (By similarity).</text>
</comment>
<comment type="subunit">
    <text evidence="3">Interacts with NR2E1; the interaction represses the transcriptional activity of NR2E1. Interact (via its N-terminus) with FAT1 (via a C-terminal domain). Interacts with BAIAP2, WWP1, WWP2, WWP3 and RERE. Interacts (via its N-terminus) with MTG8; the interaction enhances transcriptional repression of MTG8. Interacts with PQBP1 (By similarity).</text>
</comment>
<comment type="subcellular location">
    <subcellularLocation>
        <location evidence="5">Nucleus</location>
    </subcellularLocation>
    <subcellularLocation>
        <location evidence="5">Cytoplasm</location>
        <location evidence="5">Perinuclear region</location>
    </subcellularLocation>
    <subcellularLocation>
        <location evidence="5">Cell junction</location>
    </subcellularLocation>
    <text evidence="2">Shuttles between nucleus and cytoplasm. Colocalizes with MTG8 in discrete nuclear dots (By similarity). Colocalizes with FAT1 in the perinuclear area, at cell-cell junctions and leading edges of cells.</text>
</comment>
<comment type="tissue specificity">
    <text evidence="7">Predominant neuronal expression, Expressed in most brain regions including striatum, hippocampus, cerebral cortex, diencephalon, brain stem and cerebellum. Highest levels in cerebellum. Also highly expressed in kidney and testis, low expression in skeletal muscle and heart.</text>
</comment>
<comment type="developmental stage">
    <text evidence="6">Similar expression at all development stages (14.5 dpc, 17.5 dpc, newborns and adults).</text>
</comment>
<comment type="induction">
    <text evidence="5">Induced after vascular injury and by growth factors. Decreased levels with INF-gamma.</text>
</comment>
<comment type="PTM">
    <text evidence="1">Phosphorylated in vitro by MAPK8/JNK1 on Ser-732.</text>
</comment>
<reference key="1">
    <citation type="journal article" date="1995" name="Neurobiol. Dis.">
        <title>Cloning and expression of the rat atrophin-I (DRPLA disease gene) homologue.</title>
        <authorList>
            <person name="Loev S.J."/>
            <person name="Margolis R.L."/>
            <person name="Young W.S."/>
            <person name="Li S.-H."/>
            <person name="Schilling G."/>
            <person name="Ashworth R.G."/>
            <person name="Ross C.A."/>
        </authorList>
    </citation>
    <scope>NUCLEOTIDE SEQUENCE [MRNA]</scope>
    <scope>TISSUE SPECIFICITY</scope>
    <source>
        <tissue>Cerebellum</tissue>
        <tissue>Corpus striatum</tissue>
    </source>
</reference>
<reference key="2">
    <citation type="journal article" date="1995" name="Hum. Mol. Genet.">
        <title>Predominant neuronal expression of the gene responsible for dentatorubral-pallidoluysian atrophy (DRPLA) in rat.</title>
        <authorList>
            <person name="Schmitt I."/>
            <person name="Epplen J.T."/>
            <person name="Riess O."/>
        </authorList>
    </citation>
    <scope>NUCLEOTIDE SEQUENCE [GENOMIC DNA]</scope>
    <scope>DEVELOPMENTAL STAGE</scope>
    <source>
        <tissue>Brain</tissue>
        <tissue>Cerebellum</tissue>
        <tissue>Hippocampus</tissue>
        <tissue>Substantia nigra</tissue>
    </source>
</reference>
<reference key="3">
    <citation type="journal article" date="2009" name="J. Biol. Chem.">
        <title>Atrophin proteins interact with the Fat1 cadherin and regulate migration and orientation in vascular smooth muscle cells.</title>
        <authorList>
            <person name="Hou R."/>
            <person name="Sibinga N.E."/>
        </authorList>
    </citation>
    <scope>SUBCELLULAR LOCATION</scope>
    <scope>INDUCTION</scope>
</reference>
<reference key="4">
    <citation type="journal article" date="2012" name="Nat. Commun.">
        <title>Quantitative maps of protein phosphorylation sites across 14 different rat organs and tissues.</title>
        <authorList>
            <person name="Lundby A."/>
            <person name="Secher A."/>
            <person name="Lage K."/>
            <person name="Nordsborg N.B."/>
            <person name="Dmytriyev A."/>
            <person name="Lundby C."/>
            <person name="Olsen J.V."/>
        </authorList>
    </citation>
    <scope>PHOSPHORYLATION [LARGE SCALE ANALYSIS] AT SER-77; SER-79; SER-100 AND SER-106</scope>
    <scope>IDENTIFICATION BY MASS SPECTROMETRY [LARGE SCALE ANALYSIS]</scope>
</reference>
<feature type="chain" id="PRO_0000064732" description="Atrophin-1">
    <location>
        <begin position="1"/>
        <end position="1183"/>
    </location>
</feature>
<feature type="region of interest" description="Disordered" evidence="4">
    <location>
        <begin position="1"/>
        <end position="603"/>
    </location>
</feature>
<feature type="region of interest" description="Involved in binding BAIAP2" evidence="1">
    <location>
        <begin position="510"/>
        <end position="560"/>
    </location>
</feature>
<feature type="region of interest" description="Disordered" evidence="4">
    <location>
        <begin position="617"/>
        <end position="760"/>
    </location>
</feature>
<feature type="region of interest" description="Disordered" evidence="4">
    <location>
        <begin position="780"/>
        <end position="855"/>
    </location>
</feature>
<feature type="region of interest" description="Required for interaction with FAT1" evidence="1">
    <location>
        <begin position="872"/>
        <end position="887"/>
    </location>
</feature>
<feature type="region of interest" description="Disordered" evidence="4">
    <location>
        <begin position="921"/>
        <end position="940"/>
    </location>
</feature>
<feature type="short sequence motif" description="Nuclear localization signal" evidence="1">
    <location>
        <begin position="16"/>
        <end position="32"/>
    </location>
</feature>
<feature type="short sequence motif" description="Nuclear export signal" evidence="1">
    <location>
        <begin position="1026"/>
        <end position="1034"/>
    </location>
</feature>
<feature type="compositionally biased region" description="Basic and acidic residues" evidence="4">
    <location>
        <begin position="17"/>
        <end position="29"/>
    </location>
</feature>
<feature type="compositionally biased region" description="Basic and acidic residues" evidence="4">
    <location>
        <begin position="45"/>
        <end position="63"/>
    </location>
</feature>
<feature type="compositionally biased region" description="Basic and acidic residues" evidence="4">
    <location>
        <begin position="107"/>
        <end position="127"/>
    </location>
</feature>
<feature type="compositionally biased region" description="Polar residues" evidence="4">
    <location>
        <begin position="128"/>
        <end position="151"/>
    </location>
</feature>
<feature type="compositionally biased region" description="Pro residues" evidence="4">
    <location>
        <begin position="157"/>
        <end position="173"/>
    </location>
</feature>
<feature type="compositionally biased region" description="Pro residues" evidence="4">
    <location>
        <begin position="207"/>
        <end position="218"/>
    </location>
</feature>
<feature type="compositionally biased region" description="Low complexity" evidence="4">
    <location>
        <begin position="261"/>
        <end position="272"/>
    </location>
</feature>
<feature type="compositionally biased region" description="Pro residues" evidence="4">
    <location>
        <begin position="344"/>
        <end position="373"/>
    </location>
</feature>
<feature type="compositionally biased region" description="Low complexity" evidence="4">
    <location>
        <begin position="377"/>
        <end position="400"/>
    </location>
</feature>
<feature type="compositionally biased region" description="Polar residues" evidence="4">
    <location>
        <begin position="415"/>
        <end position="436"/>
    </location>
</feature>
<feature type="compositionally biased region" description="Low complexity" evidence="4">
    <location>
        <begin position="562"/>
        <end position="584"/>
    </location>
</feature>
<feature type="compositionally biased region" description="Pro residues" evidence="4">
    <location>
        <begin position="701"/>
        <end position="711"/>
    </location>
</feature>
<feature type="compositionally biased region" description="Pro residues" evidence="4">
    <location>
        <begin position="732"/>
        <end position="745"/>
    </location>
</feature>
<feature type="compositionally biased region" description="Basic and acidic residues" evidence="4">
    <location>
        <begin position="788"/>
        <end position="832"/>
    </location>
</feature>
<feature type="compositionally biased region" description="Basic and acidic residues" evidence="4">
    <location>
        <begin position="922"/>
        <end position="940"/>
    </location>
</feature>
<feature type="modified residue" description="Phosphoserine" evidence="3">
    <location>
        <position position="34"/>
    </location>
</feature>
<feature type="modified residue" description="Phosphoserine" evidence="9">
    <location>
        <position position="77"/>
    </location>
</feature>
<feature type="modified residue" description="Phosphoserine" evidence="9">
    <location>
        <position position="79"/>
    </location>
</feature>
<feature type="modified residue" description="Phosphoserine" evidence="9">
    <location>
        <position position="100"/>
    </location>
</feature>
<feature type="modified residue" description="Phosphoserine" evidence="3">
    <location>
        <position position="102"/>
    </location>
</feature>
<feature type="modified residue" description="Phosphoserine" evidence="9">
    <location>
        <position position="106"/>
    </location>
</feature>
<feature type="modified residue" description="Phosphoserine" evidence="3">
    <location>
        <position position="625"/>
    </location>
</feature>
<feature type="modified residue" description="N6-acetyllysine" evidence="3">
    <location>
        <position position="634"/>
    </location>
</feature>
<feature type="modified residue" description="Phosphothreonine" evidence="3">
    <location>
        <position position="646"/>
    </location>
</feature>
<feature type="modified residue" description="Phosphoserine" evidence="3">
    <location>
        <position position="654"/>
    </location>
</feature>
<feature type="modified residue" description="Phosphothreonine" evidence="3">
    <location>
        <position position="662"/>
    </location>
</feature>
<feature type="modified residue" description="Phosphoserine; by MAPK8" evidence="3">
    <location>
        <position position="732"/>
    </location>
</feature>
<feature type="modified residue" description="Phosphoserine" evidence="3">
    <location>
        <position position="739"/>
    </location>
</feature>
<feature type="modified residue" description="Phosphoserine" evidence="3">
    <location>
        <position position="741"/>
    </location>
</feature>
<feature type="modified residue" description="Phosphoserine" evidence="3">
    <location>
        <position position="889"/>
    </location>
</feature>
<feature type="modified residue" description="Asymmetric dimethylarginine" evidence="2">
    <location>
        <position position="1108"/>
    </location>
</feature>
<feature type="cross-link" description="Glycyl lysine isopeptide (Lys-Gly) (interchain with G-Cter in SUMO2)" evidence="3">
    <location>
        <position position="1176"/>
    </location>
</feature>
<feature type="sequence conflict" description="In Ref. 2; CAA61623." evidence="8" ref="2">
    <original>N</original>
    <variation>S</variation>
    <location>
        <position position="455"/>
    </location>
</feature>
<feature type="sequence conflict" description="In Ref. 2; CAA61623." evidence="8" ref="2">
    <original>F</original>
    <variation>L</variation>
    <location>
        <position position="594"/>
    </location>
</feature>
<feature type="sequence conflict" description="In Ref. 2; CAA61623." evidence="8" ref="2">
    <original>P</original>
    <variation>R</variation>
    <location>
        <position position="689"/>
    </location>
</feature>
<feature type="sequence conflict" description="In Ref. 2; CAA61623." evidence="8" ref="2">
    <original>T</original>
    <variation>M</variation>
    <location>
        <position position="717"/>
    </location>
</feature>
<feature type="sequence conflict" description="In Ref. 2; CAA61623." evidence="8" ref="2">
    <original>A</original>
    <variation>V</variation>
    <location>
        <position position="737"/>
    </location>
</feature>
<feature type="sequence conflict" description="In Ref. 2; CAA61623." evidence="8" ref="2">
    <location>
        <position position="965"/>
    </location>
</feature>
<keyword id="KW-0007">Acetylation</keyword>
<keyword id="KW-0965">Cell junction</keyword>
<keyword id="KW-0963">Cytoplasm</keyword>
<keyword id="KW-1017">Isopeptide bond</keyword>
<keyword id="KW-0488">Methylation</keyword>
<keyword id="KW-0539">Nucleus</keyword>
<keyword id="KW-0597">Phosphoprotein</keyword>
<keyword id="KW-1185">Reference proteome</keyword>
<keyword id="KW-0804">Transcription</keyword>
<keyword id="KW-0805">Transcription regulation</keyword>
<keyword id="KW-0832">Ubl conjugation</keyword>
<proteinExistence type="evidence at protein level"/>
<dbReference type="EMBL" id="U31777">
    <property type="protein sequence ID" value="AAA80337.1"/>
    <property type="molecule type" value="mRNA"/>
</dbReference>
<dbReference type="EMBL" id="X89453">
    <property type="protein sequence ID" value="CAA61623.1"/>
    <property type="molecule type" value="Genomic_DNA"/>
</dbReference>
<dbReference type="SMR" id="P54258"/>
<dbReference type="FunCoup" id="P54258">
    <property type="interactions" value="1511"/>
</dbReference>
<dbReference type="IntAct" id="P54258">
    <property type="interactions" value="1"/>
</dbReference>
<dbReference type="MINT" id="P54258"/>
<dbReference type="STRING" id="10116.ENSRNOP00000045475"/>
<dbReference type="iPTMnet" id="P54258"/>
<dbReference type="PhosphoSitePlus" id="P54258"/>
<dbReference type="PaxDb" id="10116-ENSRNOP00000019865"/>
<dbReference type="UCSC" id="RGD:61832">
    <property type="organism name" value="rat"/>
</dbReference>
<dbReference type="AGR" id="RGD:61832"/>
<dbReference type="RGD" id="61832">
    <property type="gene designation" value="Atn1"/>
</dbReference>
<dbReference type="eggNOG" id="KOG2133">
    <property type="taxonomic scope" value="Eukaryota"/>
</dbReference>
<dbReference type="InParanoid" id="P54258"/>
<dbReference type="PhylomeDB" id="P54258"/>
<dbReference type="PRO" id="PR:P54258"/>
<dbReference type="Proteomes" id="UP000002494">
    <property type="component" value="Unplaced"/>
</dbReference>
<dbReference type="GO" id="GO:0070161">
    <property type="term" value="C:anchoring junction"/>
    <property type="evidence" value="ECO:0007669"/>
    <property type="project" value="UniProtKB-SubCell"/>
</dbReference>
<dbReference type="GO" id="GO:0031252">
    <property type="term" value="C:cell leading edge"/>
    <property type="evidence" value="ECO:0000314"/>
    <property type="project" value="UniProtKB"/>
</dbReference>
<dbReference type="GO" id="GO:0005737">
    <property type="term" value="C:cytoplasm"/>
    <property type="evidence" value="ECO:0000266"/>
    <property type="project" value="RGD"/>
</dbReference>
<dbReference type="GO" id="GO:0016363">
    <property type="term" value="C:nuclear matrix"/>
    <property type="evidence" value="ECO:0000266"/>
    <property type="project" value="RGD"/>
</dbReference>
<dbReference type="GO" id="GO:0005634">
    <property type="term" value="C:nucleus"/>
    <property type="evidence" value="ECO:0000314"/>
    <property type="project" value="UniProtKB"/>
</dbReference>
<dbReference type="GO" id="GO:0048471">
    <property type="term" value="C:perinuclear region of cytoplasm"/>
    <property type="evidence" value="ECO:0000314"/>
    <property type="project" value="UniProtKB"/>
</dbReference>
<dbReference type="GO" id="GO:0008432">
    <property type="term" value="F:JUN kinase binding"/>
    <property type="evidence" value="ECO:0000315"/>
    <property type="project" value="RGD"/>
</dbReference>
<dbReference type="GO" id="GO:0019904">
    <property type="term" value="F:protein domain specific binding"/>
    <property type="evidence" value="ECO:0000266"/>
    <property type="project" value="RGD"/>
</dbReference>
<dbReference type="GO" id="GO:0003713">
    <property type="term" value="F:transcription coactivator activity"/>
    <property type="evidence" value="ECO:0000266"/>
    <property type="project" value="RGD"/>
</dbReference>
<dbReference type="GO" id="GO:0003714">
    <property type="term" value="F:transcription corepressor activity"/>
    <property type="evidence" value="ECO:0000266"/>
    <property type="project" value="RGD"/>
</dbReference>
<dbReference type="GO" id="GO:0001906">
    <property type="term" value="P:cell killing"/>
    <property type="evidence" value="ECO:0000266"/>
    <property type="project" value="RGD"/>
</dbReference>
<dbReference type="GO" id="GO:0016477">
    <property type="term" value="P:cell migration"/>
    <property type="evidence" value="ECO:0000266"/>
    <property type="project" value="RGD"/>
</dbReference>
<dbReference type="GO" id="GO:0008340">
    <property type="term" value="P:determination of adult lifespan"/>
    <property type="evidence" value="ECO:0000266"/>
    <property type="project" value="RGD"/>
</dbReference>
<dbReference type="GO" id="GO:0030011">
    <property type="term" value="P:maintenance of cell polarity"/>
    <property type="evidence" value="ECO:0000266"/>
    <property type="project" value="RGD"/>
</dbReference>
<dbReference type="GO" id="GO:0008584">
    <property type="term" value="P:male gonad development"/>
    <property type="evidence" value="ECO:0000266"/>
    <property type="project" value="RGD"/>
</dbReference>
<dbReference type="GO" id="GO:0035264">
    <property type="term" value="P:multicellular organism growth"/>
    <property type="evidence" value="ECO:0000266"/>
    <property type="project" value="RGD"/>
</dbReference>
<dbReference type="GO" id="GO:0000122">
    <property type="term" value="P:negative regulation of transcription by RNA polymerase II"/>
    <property type="evidence" value="ECO:0000266"/>
    <property type="project" value="RGD"/>
</dbReference>
<dbReference type="GO" id="GO:0051402">
    <property type="term" value="P:neuron apoptotic process"/>
    <property type="evidence" value="ECO:0000266"/>
    <property type="project" value="RGD"/>
</dbReference>
<dbReference type="GO" id="GO:0009791">
    <property type="term" value="P:post-embryonic development"/>
    <property type="evidence" value="ECO:0000266"/>
    <property type="project" value="RGD"/>
</dbReference>
<dbReference type="GO" id="GO:0045664">
    <property type="term" value="P:regulation of neuron differentiation"/>
    <property type="evidence" value="ECO:0000315"/>
    <property type="project" value="RGD"/>
</dbReference>
<dbReference type="GO" id="GO:0032094">
    <property type="term" value="P:response to food"/>
    <property type="evidence" value="ECO:0000266"/>
    <property type="project" value="RGD"/>
</dbReference>
<dbReference type="GO" id="GO:0007283">
    <property type="term" value="P:spermatogenesis"/>
    <property type="evidence" value="ECO:0000266"/>
    <property type="project" value="RGD"/>
</dbReference>
<dbReference type="InterPro" id="IPR017993">
    <property type="entry name" value="Atrophin-1"/>
</dbReference>
<dbReference type="InterPro" id="IPR002951">
    <property type="entry name" value="Atrophin-like"/>
</dbReference>
<dbReference type="PANTHER" id="PTHR13859:SF9">
    <property type="entry name" value="ATROPHIN-1"/>
    <property type="match status" value="1"/>
</dbReference>
<dbReference type="PANTHER" id="PTHR13859">
    <property type="entry name" value="ATROPHIN-RELATED"/>
    <property type="match status" value="1"/>
</dbReference>
<dbReference type="Pfam" id="PF03154">
    <property type="entry name" value="Atrophin-1"/>
    <property type="match status" value="2"/>
</dbReference>
<dbReference type="PRINTS" id="PR01222">
    <property type="entry name" value="ATROPHIN"/>
</dbReference>
<accession>P54258</accession>
<protein>
    <recommendedName>
        <fullName>Atrophin-1</fullName>
    </recommendedName>
    <alternativeName>
        <fullName>Dentatorubral-pallidoluysian atrophy protein homolog</fullName>
    </alternativeName>
</protein>